<protein>
    <recommendedName>
        <fullName evidence="1">Uridine kinase</fullName>
        <ecNumber evidence="1">2.7.1.48</ecNumber>
    </recommendedName>
    <alternativeName>
        <fullName evidence="1">Cytidine monophosphokinase</fullName>
    </alternativeName>
    <alternativeName>
        <fullName evidence="1">Uridine monophosphokinase</fullName>
    </alternativeName>
</protein>
<proteinExistence type="inferred from homology"/>
<accession>Q634G4</accession>
<sequence>MGTNKPVVIGIAGGSGSGKTSVTKAIFDHFKGHSILILEQDYYYKDQSHLPMEERLKTNYDHPLAFDNDLLIEHLQQLLAYKQVDKPVYDYTLHTRSEEIIPVEPKDVIILEGILILEDPRLCELMDIKLFVDTDADLRILRRMQRDIKERGRTMDSVIDQYVNVVRPMHNQFIEPSKKFADIIIPEGGQNHVAIDIMVTKIATILEQKVNL</sequence>
<keyword id="KW-0067">ATP-binding</keyword>
<keyword id="KW-0963">Cytoplasm</keyword>
<keyword id="KW-0418">Kinase</keyword>
<keyword id="KW-0547">Nucleotide-binding</keyword>
<keyword id="KW-0808">Transferase</keyword>
<feature type="chain" id="PRO_1000017865" description="Uridine kinase">
    <location>
        <begin position="1"/>
        <end position="212"/>
    </location>
</feature>
<feature type="binding site" evidence="1">
    <location>
        <begin position="13"/>
        <end position="20"/>
    </location>
    <ligand>
        <name>ATP</name>
        <dbReference type="ChEBI" id="CHEBI:30616"/>
    </ligand>
</feature>
<comment type="catalytic activity">
    <reaction evidence="1">
        <text>uridine + ATP = UMP + ADP + H(+)</text>
        <dbReference type="Rhea" id="RHEA:16825"/>
        <dbReference type="ChEBI" id="CHEBI:15378"/>
        <dbReference type="ChEBI" id="CHEBI:16704"/>
        <dbReference type="ChEBI" id="CHEBI:30616"/>
        <dbReference type="ChEBI" id="CHEBI:57865"/>
        <dbReference type="ChEBI" id="CHEBI:456216"/>
        <dbReference type="EC" id="2.7.1.48"/>
    </reaction>
</comment>
<comment type="catalytic activity">
    <reaction evidence="1">
        <text>cytidine + ATP = CMP + ADP + H(+)</text>
        <dbReference type="Rhea" id="RHEA:24674"/>
        <dbReference type="ChEBI" id="CHEBI:15378"/>
        <dbReference type="ChEBI" id="CHEBI:17562"/>
        <dbReference type="ChEBI" id="CHEBI:30616"/>
        <dbReference type="ChEBI" id="CHEBI:60377"/>
        <dbReference type="ChEBI" id="CHEBI:456216"/>
        <dbReference type="EC" id="2.7.1.48"/>
    </reaction>
</comment>
<comment type="pathway">
    <text evidence="1">Pyrimidine metabolism; CTP biosynthesis via salvage pathway; CTP from cytidine: step 1/3.</text>
</comment>
<comment type="pathway">
    <text evidence="1">Pyrimidine metabolism; UMP biosynthesis via salvage pathway; UMP from uridine: step 1/1.</text>
</comment>
<comment type="subcellular location">
    <subcellularLocation>
        <location evidence="1">Cytoplasm</location>
    </subcellularLocation>
</comment>
<comment type="similarity">
    <text evidence="1">Belongs to the uridine kinase family.</text>
</comment>
<name>URK_BACCZ</name>
<gene>
    <name evidence="1" type="primary">udk</name>
    <name type="ordered locus">BCE33L4124</name>
</gene>
<dbReference type="EC" id="2.7.1.48" evidence="1"/>
<dbReference type="EMBL" id="CP000001">
    <property type="protein sequence ID" value="AAU16145.1"/>
    <property type="molecule type" value="Genomic_DNA"/>
</dbReference>
<dbReference type="RefSeq" id="WP_000537085.1">
    <property type="nucleotide sequence ID" value="NZ_CP009968.1"/>
</dbReference>
<dbReference type="SMR" id="Q634G4"/>
<dbReference type="KEGG" id="bcz:BCE33L4124"/>
<dbReference type="PATRIC" id="fig|288681.22.peg.1260"/>
<dbReference type="UniPathway" id="UPA00574">
    <property type="reaction ID" value="UER00637"/>
</dbReference>
<dbReference type="UniPathway" id="UPA00579">
    <property type="reaction ID" value="UER00640"/>
</dbReference>
<dbReference type="Proteomes" id="UP000002612">
    <property type="component" value="Chromosome"/>
</dbReference>
<dbReference type="GO" id="GO:0005737">
    <property type="term" value="C:cytoplasm"/>
    <property type="evidence" value="ECO:0007669"/>
    <property type="project" value="UniProtKB-SubCell"/>
</dbReference>
<dbReference type="GO" id="GO:0005524">
    <property type="term" value="F:ATP binding"/>
    <property type="evidence" value="ECO:0007669"/>
    <property type="project" value="UniProtKB-UniRule"/>
</dbReference>
<dbReference type="GO" id="GO:0043771">
    <property type="term" value="F:cytidine kinase activity"/>
    <property type="evidence" value="ECO:0007669"/>
    <property type="project" value="RHEA"/>
</dbReference>
<dbReference type="GO" id="GO:0004849">
    <property type="term" value="F:uridine kinase activity"/>
    <property type="evidence" value="ECO:0007669"/>
    <property type="project" value="UniProtKB-UniRule"/>
</dbReference>
<dbReference type="GO" id="GO:0044211">
    <property type="term" value="P:CTP salvage"/>
    <property type="evidence" value="ECO:0007669"/>
    <property type="project" value="UniProtKB-UniRule"/>
</dbReference>
<dbReference type="GO" id="GO:0044206">
    <property type="term" value="P:UMP salvage"/>
    <property type="evidence" value="ECO:0007669"/>
    <property type="project" value="UniProtKB-UniRule"/>
</dbReference>
<dbReference type="CDD" id="cd02023">
    <property type="entry name" value="UMPK"/>
    <property type="match status" value="1"/>
</dbReference>
<dbReference type="Gene3D" id="3.40.50.300">
    <property type="entry name" value="P-loop containing nucleotide triphosphate hydrolases"/>
    <property type="match status" value="1"/>
</dbReference>
<dbReference type="HAMAP" id="MF_00551">
    <property type="entry name" value="Uridine_kinase"/>
    <property type="match status" value="1"/>
</dbReference>
<dbReference type="InterPro" id="IPR027417">
    <property type="entry name" value="P-loop_NTPase"/>
</dbReference>
<dbReference type="InterPro" id="IPR006083">
    <property type="entry name" value="PRK/URK"/>
</dbReference>
<dbReference type="InterPro" id="IPR026008">
    <property type="entry name" value="Uridine_kinase"/>
</dbReference>
<dbReference type="InterPro" id="IPR000764">
    <property type="entry name" value="Uridine_kinase-like"/>
</dbReference>
<dbReference type="NCBIfam" id="NF004018">
    <property type="entry name" value="PRK05480.1"/>
    <property type="match status" value="1"/>
</dbReference>
<dbReference type="NCBIfam" id="TIGR00235">
    <property type="entry name" value="udk"/>
    <property type="match status" value="1"/>
</dbReference>
<dbReference type="PANTHER" id="PTHR10285">
    <property type="entry name" value="URIDINE KINASE"/>
    <property type="match status" value="1"/>
</dbReference>
<dbReference type="Pfam" id="PF00485">
    <property type="entry name" value="PRK"/>
    <property type="match status" value="1"/>
</dbReference>
<dbReference type="PRINTS" id="PR00988">
    <property type="entry name" value="URIDINKINASE"/>
</dbReference>
<dbReference type="SUPFAM" id="SSF52540">
    <property type="entry name" value="P-loop containing nucleoside triphosphate hydrolases"/>
    <property type="match status" value="1"/>
</dbReference>
<evidence type="ECO:0000255" key="1">
    <source>
        <dbReference type="HAMAP-Rule" id="MF_00551"/>
    </source>
</evidence>
<reference key="1">
    <citation type="journal article" date="2006" name="J. Bacteriol.">
        <title>Pathogenomic sequence analysis of Bacillus cereus and Bacillus thuringiensis isolates closely related to Bacillus anthracis.</title>
        <authorList>
            <person name="Han C.S."/>
            <person name="Xie G."/>
            <person name="Challacombe J.F."/>
            <person name="Altherr M.R."/>
            <person name="Bhotika S.S."/>
            <person name="Bruce D."/>
            <person name="Campbell C.S."/>
            <person name="Campbell M.L."/>
            <person name="Chen J."/>
            <person name="Chertkov O."/>
            <person name="Cleland C."/>
            <person name="Dimitrijevic M."/>
            <person name="Doggett N.A."/>
            <person name="Fawcett J.J."/>
            <person name="Glavina T."/>
            <person name="Goodwin L.A."/>
            <person name="Hill K.K."/>
            <person name="Hitchcock P."/>
            <person name="Jackson P.J."/>
            <person name="Keim P."/>
            <person name="Kewalramani A.R."/>
            <person name="Longmire J."/>
            <person name="Lucas S."/>
            <person name="Malfatti S."/>
            <person name="McMurry K."/>
            <person name="Meincke L.J."/>
            <person name="Misra M."/>
            <person name="Moseman B.L."/>
            <person name="Mundt M."/>
            <person name="Munk A.C."/>
            <person name="Okinaka R.T."/>
            <person name="Parson-Quintana B."/>
            <person name="Reilly L.P."/>
            <person name="Richardson P."/>
            <person name="Robinson D.L."/>
            <person name="Rubin E."/>
            <person name="Saunders E."/>
            <person name="Tapia R."/>
            <person name="Tesmer J.G."/>
            <person name="Thayer N."/>
            <person name="Thompson L.S."/>
            <person name="Tice H."/>
            <person name="Ticknor L.O."/>
            <person name="Wills P.L."/>
            <person name="Brettin T.S."/>
            <person name="Gilna P."/>
        </authorList>
    </citation>
    <scope>NUCLEOTIDE SEQUENCE [LARGE SCALE GENOMIC DNA]</scope>
    <source>
        <strain>ZK / E33L</strain>
    </source>
</reference>
<organism>
    <name type="scientific">Bacillus cereus (strain ZK / E33L)</name>
    <dbReference type="NCBI Taxonomy" id="288681"/>
    <lineage>
        <taxon>Bacteria</taxon>
        <taxon>Bacillati</taxon>
        <taxon>Bacillota</taxon>
        <taxon>Bacilli</taxon>
        <taxon>Bacillales</taxon>
        <taxon>Bacillaceae</taxon>
        <taxon>Bacillus</taxon>
        <taxon>Bacillus cereus group</taxon>
    </lineage>
</organism>